<protein>
    <recommendedName>
        <fullName evidence="4">Salivary protein 15a</fullName>
        <shortName evidence="3">PdSP15a</shortName>
    </recommendedName>
</protein>
<feature type="signal peptide" evidence="1">
    <location>
        <begin position="1"/>
        <end position="20"/>
    </location>
</feature>
<feature type="chain" id="PRO_5004165299" description="Salivary protein 15a" evidence="4">
    <location>
        <begin position="21"/>
        <end position="142"/>
    </location>
</feature>
<feature type="disulfide bond" evidence="6">
    <location>
        <begin position="27"/>
        <end position="44"/>
    </location>
</feature>
<feature type="disulfide bond" evidence="6">
    <location>
        <begin position="40"/>
        <end position="108"/>
    </location>
</feature>
<feature type="disulfide bond" evidence="6">
    <location>
        <begin position="91"/>
        <end position="117"/>
    </location>
</feature>
<feature type="helix" evidence="7">
    <location>
        <begin position="23"/>
        <end position="30"/>
    </location>
</feature>
<feature type="helix" evidence="7">
    <location>
        <begin position="38"/>
        <end position="40"/>
    </location>
</feature>
<feature type="helix" evidence="7">
    <location>
        <begin position="41"/>
        <end position="46"/>
    </location>
</feature>
<feature type="turn" evidence="7">
    <location>
        <begin position="47"/>
        <end position="50"/>
    </location>
</feature>
<feature type="helix" evidence="7">
    <location>
        <begin position="60"/>
        <end position="72"/>
    </location>
</feature>
<feature type="helix" evidence="7">
    <location>
        <begin position="78"/>
        <end position="80"/>
    </location>
</feature>
<feature type="helix" evidence="7">
    <location>
        <begin position="81"/>
        <end position="101"/>
    </location>
</feature>
<feature type="helix" evidence="7">
    <location>
        <begin position="108"/>
        <end position="118"/>
    </location>
</feature>
<feature type="helix" evidence="7">
    <location>
        <begin position="126"/>
        <end position="138"/>
    </location>
</feature>
<keyword id="KW-0002">3D-structure</keyword>
<keyword id="KW-1203">Blood coagulation cascade inhibiting toxin</keyword>
<keyword id="KW-0903">Direct protein sequencing</keyword>
<keyword id="KW-1015">Disulfide bond</keyword>
<keyword id="KW-1199">Hemostasis impairing toxin</keyword>
<keyword id="KW-0964">Secreted</keyword>
<keyword id="KW-0732">Signal</keyword>
<keyword id="KW-0800">Toxin</keyword>
<comment type="function">
    <text evidence="2">Inhibits contact coagulation pathway activation in the host by sequestering anionic polymers, such as polyphosphate and dextran sulfate, and thus blocking interaction of protein components of the pathway with negatively charged surfaces (PubMed:24092749). Inhibits dextran sulfate-mediated autoactivation of host coagulation factor XII (F12) (PubMed:24092749). Inhibits dextran sulfate-mediated autoactivation of host factor XI (F11) (PubMed:24092749). Inhibits polyphosphate-mediated activation of host F11 by thrombin (F2) (PubMed:24092749). May inhibit dextran sulfate-mediated bradykinin generation in host plasma (PubMed:24092749).</text>
</comment>
<comment type="subcellular location">
    <subcellularLocation>
        <location evidence="4">Secreted</location>
    </subcellularLocation>
</comment>
<comment type="tissue specificity">
    <text evidence="1">Female salivary gland (at protein level).</text>
</comment>
<comment type="similarity">
    <text evidence="4">Belongs to the PBP/GOBP family.</text>
</comment>
<dbReference type="EMBL" id="DQ826514">
    <property type="protein sequence ID" value="ABI15933.1"/>
    <property type="molecule type" value="mRNA"/>
</dbReference>
<dbReference type="PDB" id="4OZD">
    <property type="method" value="X-ray"/>
    <property type="resolution" value="2.95 A"/>
    <property type="chains" value="A/B/C/D/E/F/G=21-142"/>
</dbReference>
<dbReference type="PDBsum" id="4OZD"/>
<dbReference type="SMR" id="Q06KA5"/>
<dbReference type="EvolutionaryTrace" id="Q06KA5"/>
<dbReference type="GO" id="GO:0005576">
    <property type="term" value="C:extracellular region"/>
    <property type="evidence" value="ECO:0007669"/>
    <property type="project" value="UniProtKB-SubCell"/>
</dbReference>
<dbReference type="GO" id="GO:0140313">
    <property type="term" value="F:molecular sequestering activity"/>
    <property type="evidence" value="ECO:0000314"/>
    <property type="project" value="UniProtKB"/>
</dbReference>
<dbReference type="GO" id="GO:0005549">
    <property type="term" value="F:odorant binding"/>
    <property type="evidence" value="ECO:0007669"/>
    <property type="project" value="InterPro"/>
</dbReference>
<dbReference type="GO" id="GO:0090729">
    <property type="term" value="F:toxin activity"/>
    <property type="evidence" value="ECO:0007669"/>
    <property type="project" value="UniProtKB-KW"/>
</dbReference>
<dbReference type="GO" id="GO:0035899">
    <property type="term" value="P:suppression of blood coagulation in another organism"/>
    <property type="evidence" value="ECO:0000314"/>
    <property type="project" value="UniProtKB"/>
</dbReference>
<dbReference type="Gene3D" id="1.10.238.20">
    <property type="entry name" value="Pheromone/general odorant binding protein domain"/>
    <property type="match status" value="1"/>
</dbReference>
<dbReference type="InterPro" id="IPR006170">
    <property type="entry name" value="PBP/GOBP"/>
</dbReference>
<dbReference type="InterPro" id="IPR036728">
    <property type="entry name" value="PBP_GOBP_sf"/>
</dbReference>
<dbReference type="Pfam" id="PF01395">
    <property type="entry name" value="PBP_GOBP"/>
    <property type="match status" value="1"/>
</dbReference>
<dbReference type="SUPFAM" id="SSF47565">
    <property type="entry name" value="Insect pheromone/odorant-binding proteins"/>
    <property type="match status" value="1"/>
</dbReference>
<dbReference type="PROSITE" id="PS51257">
    <property type="entry name" value="PROKAR_LIPOPROTEIN"/>
    <property type="match status" value="1"/>
</dbReference>
<sequence length="142" mass="16504">MKYLGLALISAVFLIGACQAETPSQKCEEKYKGNTDKISCLHHCKYQYYGFIDVNYNIAQSEIRKFSNVLMDYGVVDKSKKRELKKVMHECAKQVKKEARKDSHWLNCRTSINYYRCVLTSKLIGPQRFDKAIQDYDKTISV</sequence>
<accession>Q06KA5</accession>
<evidence type="ECO:0000269" key="1">
    <source>
    </source>
</evidence>
<evidence type="ECO:0000269" key="2">
    <source>
    </source>
</evidence>
<evidence type="ECO:0000303" key="3">
    <source>
    </source>
</evidence>
<evidence type="ECO:0000305" key="4"/>
<evidence type="ECO:0000312" key="5">
    <source>
        <dbReference type="EMBL" id="ABI15933.1"/>
    </source>
</evidence>
<evidence type="ECO:0007744" key="6">
    <source>
        <dbReference type="PDB" id="4OZD"/>
    </source>
</evidence>
<evidence type="ECO:0007829" key="7">
    <source>
        <dbReference type="PDB" id="4OZD"/>
    </source>
</evidence>
<reference evidence="5" key="1">
    <citation type="journal article" date="2006" name="BMC Genomics">
        <title>High degree of conservancy among secreted salivary gland proteins from two geographically distant Phlebotomus duboscqi sandflies populations (Mali and Kenya).</title>
        <authorList>
            <person name="Kato H."/>
            <person name="Anderson J.M."/>
            <person name="Kamhawi S."/>
            <person name="Oliveira F."/>
            <person name="Lawyer P.G."/>
            <person name="Pham V.M."/>
            <person name="Sangare C.S."/>
            <person name="Samake S."/>
            <person name="Sissoko I."/>
            <person name="Garfield M."/>
            <person name="Sigutova L."/>
            <person name="Volf P."/>
            <person name="Doumbia S."/>
            <person name="Valenzuela J.G."/>
        </authorList>
    </citation>
    <scope>NUCLEOTIDE SEQUENCE [LARGE SCALE MRNA]</scope>
    <scope>PROTEIN SEQUENCE OF 21-31</scope>
    <scope>TISSUE SPECIFICITY</scope>
    <source>
        <strain evidence="5">Mali</strain>
    </source>
</reference>
<reference evidence="4" key="2">
    <citation type="journal article" date="2013" name="Arterioscler. Thromb. Vasc. Biol.">
        <title>Novel family of insect salivary inhibitors blocks contact pathway activation by binding to polyphosphate, heparin, and dextran sulfate.</title>
        <authorList>
            <person name="Alvarenga P.H."/>
            <person name="Xu X."/>
            <person name="Oliveira F."/>
            <person name="Chagas A.C."/>
            <person name="Nascimento C.R."/>
            <person name="Francischetti I.M."/>
            <person name="Juliano M.A."/>
            <person name="Juliano L."/>
            <person name="Scharfstein J."/>
            <person name="Valenzuela J.G."/>
            <person name="Ribeiro J.M."/>
            <person name="Andersen J.F."/>
        </authorList>
    </citation>
    <scope>FUNCTION</scope>
</reference>
<reference evidence="6" key="3">
    <citation type="submission" date="2014-02" db="PDB data bank">
        <title>Protection against cutaneous leishmaniasis in non-human primates by immunization with an insect salivary protein.</title>
        <authorList>
            <person name="Oliveira F."/>
            <person name="Rowton E."/>
            <person name="Gomes R."/>
            <person name="Castrovinci P.A."/>
            <person name="Lawyer P.G."/>
            <person name="Teixeira C."/>
            <person name="Aslan H."/>
            <person name="Kleeman L."/>
            <person name="Meneses C."/>
            <person name="Rowland T."/>
            <person name="Gilmore D."/>
            <person name="Andersen J."/>
            <person name="Alvarenga P.H."/>
            <person name="Kamhawi S."/>
            <person name="Valenzuela J.G."/>
        </authorList>
    </citation>
    <scope>X-RAY CRYSTALLOGRAPHY (2.95 ANGSTROMS) OF 21-142</scope>
    <scope>DISULFIDE BONDS</scope>
</reference>
<gene>
    <name evidence="5" type="primary">M02</name>
</gene>
<name>SP15A_PHLDU</name>
<organism evidence="5">
    <name type="scientific">Phlebotomus duboscqi</name>
    <name type="common">Sandfly</name>
    <dbReference type="NCBI Taxonomy" id="37738"/>
    <lineage>
        <taxon>Eukaryota</taxon>
        <taxon>Metazoa</taxon>
        <taxon>Ecdysozoa</taxon>
        <taxon>Arthropoda</taxon>
        <taxon>Hexapoda</taxon>
        <taxon>Insecta</taxon>
        <taxon>Pterygota</taxon>
        <taxon>Neoptera</taxon>
        <taxon>Endopterygota</taxon>
        <taxon>Diptera</taxon>
        <taxon>Nematocera</taxon>
        <taxon>Psychodoidea</taxon>
        <taxon>Psychodidae</taxon>
        <taxon>Phlebotomus</taxon>
        <taxon>Phlebotomus</taxon>
    </lineage>
</organism>
<proteinExistence type="evidence at protein level"/>